<sequence>MILLKRTKIRGVSVSFVSLQRRTHSRLVNPIRQQHQQITKQRSSKILKNAHFYDFRSLPKVPTTQYLEARELTRDILYSGYRPVMYPVKENPLFRDKKRKSLQTLLTMNEKTNAEAKTIDEKKHKNILFGERGTGGIMSGGVNGTWKYNPTVPNELLPFNWWSTSSMGMEYFPEWKNVPPYMMRKLKPFDKALQMRLTHKSKKKMK</sequence>
<name>SUE1_YEAST</name>
<keyword id="KW-0496">Mitochondrion</keyword>
<keyword id="KW-1185">Reference proteome</keyword>
<keyword id="KW-0809">Transit peptide</keyword>
<feature type="transit peptide" description="Mitochondrion" evidence="1">
    <location>
        <begin position="1"/>
        <end position="24"/>
    </location>
</feature>
<feature type="chain" id="PRO_0000270578" description="Protein SUE1, mitochondrial">
    <location>
        <begin position="25"/>
        <end position="206"/>
    </location>
</feature>
<dbReference type="EMBL" id="U40829">
    <property type="protein sequence ID" value="AAB68288.1"/>
    <property type="molecule type" value="Genomic_DNA"/>
</dbReference>
<dbReference type="EMBL" id="AY558060">
    <property type="protein sequence ID" value="AAS56386.1"/>
    <property type="molecule type" value="Genomic_DNA"/>
</dbReference>
<dbReference type="EMBL" id="BK006949">
    <property type="protein sequence ID" value="DAA11563.1"/>
    <property type="molecule type" value="Genomic_DNA"/>
</dbReference>
<dbReference type="PIR" id="S69037">
    <property type="entry name" value="S69037"/>
</dbReference>
<dbReference type="RefSeq" id="NP_015477.1">
    <property type="nucleotide sequence ID" value="NM_001184248.1"/>
</dbReference>
<dbReference type="BioGRID" id="36318">
    <property type="interactions" value="112"/>
</dbReference>
<dbReference type="FunCoup" id="Q06524">
    <property type="interactions" value="56"/>
</dbReference>
<dbReference type="IntAct" id="Q06524">
    <property type="interactions" value="1"/>
</dbReference>
<dbReference type="MINT" id="Q06524"/>
<dbReference type="STRING" id="4932.YPR151C"/>
<dbReference type="PaxDb" id="4932-YPR151C"/>
<dbReference type="PeptideAtlas" id="Q06524"/>
<dbReference type="EnsemblFungi" id="YPR151C_mRNA">
    <property type="protein sequence ID" value="YPR151C"/>
    <property type="gene ID" value="YPR151C"/>
</dbReference>
<dbReference type="GeneID" id="856274"/>
<dbReference type="KEGG" id="sce:YPR151C"/>
<dbReference type="AGR" id="SGD:S000006355"/>
<dbReference type="SGD" id="S000006355">
    <property type="gene designation" value="SUE1"/>
</dbReference>
<dbReference type="VEuPathDB" id="FungiDB:YPR151C"/>
<dbReference type="eggNOG" id="ENOG502S2RD">
    <property type="taxonomic scope" value="Eukaryota"/>
</dbReference>
<dbReference type="HOGENOM" id="CLU_1316324_0_0_1"/>
<dbReference type="InParanoid" id="Q06524"/>
<dbReference type="OMA" id="LLPYSWW"/>
<dbReference type="OrthoDB" id="3992052at2759"/>
<dbReference type="BioCyc" id="YEAST:G3O-34282-MONOMER"/>
<dbReference type="BioGRID-ORCS" id="856274">
    <property type="hits" value="1 hit in 10 CRISPR screens"/>
</dbReference>
<dbReference type="PRO" id="PR:Q06524"/>
<dbReference type="Proteomes" id="UP000002311">
    <property type="component" value="Chromosome XVI"/>
</dbReference>
<dbReference type="RNAct" id="Q06524">
    <property type="molecule type" value="protein"/>
</dbReference>
<dbReference type="GO" id="GO:0005740">
    <property type="term" value="C:mitochondrial envelope"/>
    <property type="evidence" value="ECO:0000314"/>
    <property type="project" value="SGD"/>
</dbReference>
<dbReference type="GO" id="GO:0030163">
    <property type="term" value="P:protein catabolic process"/>
    <property type="evidence" value="ECO:0000315"/>
    <property type="project" value="SGD"/>
</dbReference>
<dbReference type="InterPro" id="IPR014804">
    <property type="entry name" value="Pet20-like"/>
</dbReference>
<dbReference type="Pfam" id="PF08692">
    <property type="entry name" value="Pet20"/>
    <property type="match status" value="1"/>
</dbReference>
<proteinExistence type="predicted"/>
<protein>
    <recommendedName>
        <fullName>Protein SUE1, mitochondrial</fullName>
    </recommendedName>
</protein>
<gene>
    <name evidence="5" type="primary">SUE1</name>
    <name type="ordered locus">YPR151C</name>
</gene>
<accession>Q06524</accession>
<accession>D6W4E7</accession>
<organism>
    <name type="scientific">Saccharomyces cerevisiae (strain ATCC 204508 / S288c)</name>
    <name type="common">Baker's yeast</name>
    <dbReference type="NCBI Taxonomy" id="559292"/>
    <lineage>
        <taxon>Eukaryota</taxon>
        <taxon>Fungi</taxon>
        <taxon>Dikarya</taxon>
        <taxon>Ascomycota</taxon>
        <taxon>Saccharomycotina</taxon>
        <taxon>Saccharomycetes</taxon>
        <taxon>Saccharomycetales</taxon>
        <taxon>Saccharomycetaceae</taxon>
        <taxon>Saccharomyces</taxon>
    </lineage>
</organism>
<evidence type="ECO:0000255" key="1"/>
<evidence type="ECO:0000269" key="2">
    <source>
    </source>
</evidence>
<evidence type="ECO:0000305" key="3"/>
<evidence type="ECO:0000312" key="4">
    <source>
        <dbReference type="EMBL" id="AAB68288.1"/>
    </source>
</evidence>
<evidence type="ECO:0000312" key="5">
    <source>
        <dbReference type="SGD" id="S000006355"/>
    </source>
</evidence>
<comment type="function">
    <text evidence="2">Required for degradation of unstable forms of cytochrome c.</text>
</comment>
<comment type="subcellular location">
    <subcellularLocation>
        <location evidence="2">Mitochondrion envelope</location>
    </subcellularLocation>
</comment>
<reference evidence="4" key="1">
    <citation type="journal article" date="1997" name="Nature">
        <title>The nucleotide sequence of Saccharomyces cerevisiae chromosome XVI.</title>
        <authorList>
            <person name="Bussey H."/>
            <person name="Storms R.K."/>
            <person name="Ahmed A."/>
            <person name="Albermann K."/>
            <person name="Allen E."/>
            <person name="Ansorge W."/>
            <person name="Araujo R."/>
            <person name="Aparicio A."/>
            <person name="Barrell B.G."/>
            <person name="Badcock K."/>
            <person name="Benes V."/>
            <person name="Botstein D."/>
            <person name="Bowman S."/>
            <person name="Brueckner M."/>
            <person name="Carpenter J."/>
            <person name="Cherry J.M."/>
            <person name="Chung E."/>
            <person name="Churcher C.M."/>
            <person name="Coster F."/>
            <person name="Davis K."/>
            <person name="Davis R.W."/>
            <person name="Dietrich F.S."/>
            <person name="Delius H."/>
            <person name="DiPaolo T."/>
            <person name="Dubois E."/>
            <person name="Duesterhoeft A."/>
            <person name="Duncan M."/>
            <person name="Floeth M."/>
            <person name="Fortin N."/>
            <person name="Friesen J.D."/>
            <person name="Fritz C."/>
            <person name="Goffeau A."/>
            <person name="Hall J."/>
            <person name="Hebling U."/>
            <person name="Heumann K."/>
            <person name="Hilbert H."/>
            <person name="Hillier L.W."/>
            <person name="Hunicke-Smith S."/>
            <person name="Hyman R.W."/>
            <person name="Johnston M."/>
            <person name="Kalman S."/>
            <person name="Kleine K."/>
            <person name="Komp C."/>
            <person name="Kurdi O."/>
            <person name="Lashkari D."/>
            <person name="Lew H."/>
            <person name="Lin A."/>
            <person name="Lin D."/>
            <person name="Louis E.J."/>
            <person name="Marathe R."/>
            <person name="Messenguy F."/>
            <person name="Mewes H.-W."/>
            <person name="Mirtipati S."/>
            <person name="Moestl D."/>
            <person name="Mueller-Auer S."/>
            <person name="Namath A."/>
            <person name="Nentwich U."/>
            <person name="Oefner P."/>
            <person name="Pearson D."/>
            <person name="Petel F.X."/>
            <person name="Pohl T.M."/>
            <person name="Purnelle B."/>
            <person name="Rajandream M.A."/>
            <person name="Rechmann S."/>
            <person name="Rieger M."/>
            <person name="Riles L."/>
            <person name="Roberts D."/>
            <person name="Schaefer M."/>
            <person name="Scharfe M."/>
            <person name="Scherens B."/>
            <person name="Schramm S."/>
            <person name="Schroeder M."/>
            <person name="Sdicu A.-M."/>
            <person name="Tettelin H."/>
            <person name="Urrestarazu L.A."/>
            <person name="Ushinsky S."/>
            <person name="Vierendeels F."/>
            <person name="Vissers S."/>
            <person name="Voss H."/>
            <person name="Walsh S.V."/>
            <person name="Wambutt R."/>
            <person name="Wang Y."/>
            <person name="Wedler E."/>
            <person name="Wedler H."/>
            <person name="Winnett E."/>
            <person name="Zhong W.-W."/>
            <person name="Zollner A."/>
            <person name="Vo D.H."/>
            <person name="Hani J."/>
        </authorList>
    </citation>
    <scope>NUCLEOTIDE SEQUENCE [LARGE SCALE GENOMIC DNA]</scope>
    <source>
        <strain>ATCC 204508 / S288c</strain>
    </source>
</reference>
<reference key="2">
    <citation type="journal article" date="2014" name="G3 (Bethesda)">
        <title>The reference genome sequence of Saccharomyces cerevisiae: Then and now.</title>
        <authorList>
            <person name="Engel S.R."/>
            <person name="Dietrich F.S."/>
            <person name="Fisk D.G."/>
            <person name="Binkley G."/>
            <person name="Balakrishnan R."/>
            <person name="Costanzo M.C."/>
            <person name="Dwight S.S."/>
            <person name="Hitz B.C."/>
            <person name="Karra K."/>
            <person name="Nash R.S."/>
            <person name="Weng S."/>
            <person name="Wong E.D."/>
            <person name="Lloyd P."/>
            <person name="Skrzypek M.S."/>
            <person name="Miyasato S.R."/>
            <person name="Simison M."/>
            <person name="Cherry J.M."/>
        </authorList>
    </citation>
    <scope>GENOME REANNOTATION</scope>
    <source>
        <strain>ATCC 204508 / S288c</strain>
    </source>
</reference>
<reference key="3">
    <citation type="journal article" date="2007" name="Genome Res.">
        <title>Approaching a complete repository of sequence-verified protein-encoding clones for Saccharomyces cerevisiae.</title>
        <authorList>
            <person name="Hu Y."/>
            <person name="Rolfs A."/>
            <person name="Bhullar B."/>
            <person name="Murthy T.V.S."/>
            <person name="Zhu C."/>
            <person name="Berger M.F."/>
            <person name="Camargo A.A."/>
            <person name="Kelley F."/>
            <person name="McCarron S."/>
            <person name="Jepson D."/>
            <person name="Richardson A."/>
            <person name="Raphael J."/>
            <person name="Moreira D."/>
            <person name="Taycher E."/>
            <person name="Zuo D."/>
            <person name="Mohr S."/>
            <person name="Kane M.F."/>
            <person name="Williamson J."/>
            <person name="Simpson A.J.G."/>
            <person name="Bulyk M.L."/>
            <person name="Harlow E."/>
            <person name="Marsischky G."/>
            <person name="Kolodner R.D."/>
            <person name="LaBaer J."/>
        </authorList>
    </citation>
    <scope>NUCLEOTIDE SEQUENCE [GENOMIC DNA]</scope>
    <source>
        <strain>ATCC 204508 / S288c</strain>
    </source>
</reference>
<reference evidence="3" key="4">
    <citation type="journal article" date="2004" name="J. Biol. Chem.">
        <title>Sue1p is required for degradation of labile forms of altered cytochromes C in yeast mitochondria.</title>
        <authorList>
            <person name="Wei J."/>
            <person name="Sherman F."/>
        </authorList>
    </citation>
    <scope>FUNCTION</scope>
    <scope>SUBCELLULAR LOCATION</scope>
</reference>